<comment type="function">
    <text evidence="1">Catalyzes the attachment of alanine to tRNA(Ala) in a two-step reaction: alanine is first activated by ATP to form Ala-AMP and then transferred to the acceptor end of tRNA(Ala). Also edits incorrectly charged Ser-tRNA(Ala) and Gly-tRNA(Ala) via its editing domain.</text>
</comment>
<comment type="catalytic activity">
    <reaction evidence="1">
        <text>tRNA(Ala) + L-alanine + ATP = L-alanyl-tRNA(Ala) + AMP + diphosphate</text>
        <dbReference type="Rhea" id="RHEA:12540"/>
        <dbReference type="Rhea" id="RHEA-COMP:9657"/>
        <dbReference type="Rhea" id="RHEA-COMP:9923"/>
        <dbReference type="ChEBI" id="CHEBI:30616"/>
        <dbReference type="ChEBI" id="CHEBI:33019"/>
        <dbReference type="ChEBI" id="CHEBI:57972"/>
        <dbReference type="ChEBI" id="CHEBI:78442"/>
        <dbReference type="ChEBI" id="CHEBI:78497"/>
        <dbReference type="ChEBI" id="CHEBI:456215"/>
        <dbReference type="EC" id="6.1.1.7"/>
    </reaction>
</comment>
<comment type="cofactor">
    <cofactor evidence="1">
        <name>Zn(2+)</name>
        <dbReference type="ChEBI" id="CHEBI:29105"/>
    </cofactor>
    <text evidence="1">Binds 1 zinc ion per subunit.</text>
</comment>
<comment type="subcellular location">
    <subcellularLocation>
        <location evidence="1">Cytoplasm</location>
    </subcellularLocation>
</comment>
<comment type="domain">
    <text evidence="1">Consists of three domains; the N-terminal catalytic domain, the editing domain and the C-terminal C-Ala domain. The editing domain removes incorrectly charged amino acids, while the C-Ala domain, along with tRNA(Ala), serves as a bridge to cooperatively bring together the editing and aminoacylation centers thus stimulating deacylation of misacylated tRNAs.</text>
</comment>
<comment type="similarity">
    <text evidence="1">Belongs to the class-II aminoacyl-tRNA synthetase family.</text>
</comment>
<name>SYA_THESQ</name>
<protein>
    <recommendedName>
        <fullName evidence="1">Alanine--tRNA ligase</fullName>
        <ecNumber evidence="1">6.1.1.7</ecNumber>
    </recommendedName>
    <alternativeName>
        <fullName evidence="1">Alanyl-tRNA synthetase</fullName>
        <shortName evidence="1">AlaRS</shortName>
    </alternativeName>
</protein>
<dbReference type="EC" id="6.1.1.7" evidence="1"/>
<dbReference type="EMBL" id="CP000969">
    <property type="protein sequence ID" value="ACB09777.1"/>
    <property type="molecule type" value="Genomic_DNA"/>
</dbReference>
<dbReference type="RefSeq" id="WP_012311125.1">
    <property type="nucleotide sequence ID" value="NC_010483.1"/>
</dbReference>
<dbReference type="SMR" id="B1LBS9"/>
<dbReference type="KEGG" id="trq:TRQ2_1433"/>
<dbReference type="HOGENOM" id="CLU_004485_1_1_0"/>
<dbReference type="Proteomes" id="UP000001687">
    <property type="component" value="Chromosome"/>
</dbReference>
<dbReference type="GO" id="GO:0005829">
    <property type="term" value="C:cytosol"/>
    <property type="evidence" value="ECO:0007669"/>
    <property type="project" value="TreeGrafter"/>
</dbReference>
<dbReference type="GO" id="GO:0004813">
    <property type="term" value="F:alanine-tRNA ligase activity"/>
    <property type="evidence" value="ECO:0007669"/>
    <property type="project" value="UniProtKB-UniRule"/>
</dbReference>
<dbReference type="GO" id="GO:0002161">
    <property type="term" value="F:aminoacyl-tRNA deacylase activity"/>
    <property type="evidence" value="ECO:0007669"/>
    <property type="project" value="TreeGrafter"/>
</dbReference>
<dbReference type="GO" id="GO:0005524">
    <property type="term" value="F:ATP binding"/>
    <property type="evidence" value="ECO:0007669"/>
    <property type="project" value="UniProtKB-UniRule"/>
</dbReference>
<dbReference type="GO" id="GO:0000049">
    <property type="term" value="F:tRNA binding"/>
    <property type="evidence" value="ECO:0007669"/>
    <property type="project" value="UniProtKB-KW"/>
</dbReference>
<dbReference type="GO" id="GO:0008270">
    <property type="term" value="F:zinc ion binding"/>
    <property type="evidence" value="ECO:0007669"/>
    <property type="project" value="UniProtKB-UniRule"/>
</dbReference>
<dbReference type="GO" id="GO:0006419">
    <property type="term" value="P:alanyl-tRNA aminoacylation"/>
    <property type="evidence" value="ECO:0007669"/>
    <property type="project" value="UniProtKB-UniRule"/>
</dbReference>
<dbReference type="CDD" id="cd00673">
    <property type="entry name" value="AlaRS_core"/>
    <property type="match status" value="1"/>
</dbReference>
<dbReference type="FunFam" id="2.40.30.130:FF:000001">
    <property type="entry name" value="Alanine--tRNA ligase"/>
    <property type="match status" value="1"/>
</dbReference>
<dbReference type="FunFam" id="3.10.310.40:FF:000001">
    <property type="entry name" value="Alanine--tRNA ligase"/>
    <property type="match status" value="1"/>
</dbReference>
<dbReference type="FunFam" id="3.30.54.20:FF:000001">
    <property type="entry name" value="Alanine--tRNA ligase"/>
    <property type="match status" value="1"/>
</dbReference>
<dbReference type="FunFam" id="3.30.930.10:FF:000004">
    <property type="entry name" value="Alanine--tRNA ligase"/>
    <property type="match status" value="1"/>
</dbReference>
<dbReference type="FunFam" id="3.30.980.10:FF:000004">
    <property type="entry name" value="Alanine--tRNA ligase, cytoplasmic"/>
    <property type="match status" value="1"/>
</dbReference>
<dbReference type="Gene3D" id="2.40.30.130">
    <property type="match status" value="1"/>
</dbReference>
<dbReference type="Gene3D" id="3.10.310.40">
    <property type="match status" value="1"/>
</dbReference>
<dbReference type="Gene3D" id="3.30.54.20">
    <property type="match status" value="1"/>
</dbReference>
<dbReference type="Gene3D" id="6.10.250.550">
    <property type="match status" value="1"/>
</dbReference>
<dbReference type="Gene3D" id="3.30.930.10">
    <property type="entry name" value="Bira Bifunctional Protein, Domain 2"/>
    <property type="match status" value="1"/>
</dbReference>
<dbReference type="Gene3D" id="3.30.980.10">
    <property type="entry name" value="Threonyl-trna Synthetase, Chain A, domain 2"/>
    <property type="match status" value="1"/>
</dbReference>
<dbReference type="HAMAP" id="MF_00036_B">
    <property type="entry name" value="Ala_tRNA_synth_B"/>
    <property type="match status" value="1"/>
</dbReference>
<dbReference type="InterPro" id="IPR045864">
    <property type="entry name" value="aa-tRNA-synth_II/BPL/LPL"/>
</dbReference>
<dbReference type="InterPro" id="IPR002318">
    <property type="entry name" value="Ala-tRNA-lgiase_IIc"/>
</dbReference>
<dbReference type="InterPro" id="IPR018162">
    <property type="entry name" value="Ala-tRNA-ligase_IIc_anticod-bd"/>
</dbReference>
<dbReference type="InterPro" id="IPR018165">
    <property type="entry name" value="Ala-tRNA-synth_IIc_core"/>
</dbReference>
<dbReference type="InterPro" id="IPR018164">
    <property type="entry name" value="Ala-tRNA-synth_IIc_N"/>
</dbReference>
<dbReference type="InterPro" id="IPR050058">
    <property type="entry name" value="Ala-tRNA_ligase"/>
</dbReference>
<dbReference type="InterPro" id="IPR023033">
    <property type="entry name" value="Ala_tRNA_ligase_euk/bac"/>
</dbReference>
<dbReference type="InterPro" id="IPR003156">
    <property type="entry name" value="DHHA1_dom"/>
</dbReference>
<dbReference type="InterPro" id="IPR018163">
    <property type="entry name" value="Thr/Ala-tRNA-synth_IIc_edit"/>
</dbReference>
<dbReference type="InterPro" id="IPR009000">
    <property type="entry name" value="Transl_B-barrel_sf"/>
</dbReference>
<dbReference type="InterPro" id="IPR012947">
    <property type="entry name" value="tRNA_SAD"/>
</dbReference>
<dbReference type="NCBIfam" id="TIGR00344">
    <property type="entry name" value="alaS"/>
    <property type="match status" value="1"/>
</dbReference>
<dbReference type="PANTHER" id="PTHR11777:SF9">
    <property type="entry name" value="ALANINE--TRNA LIGASE, CYTOPLASMIC"/>
    <property type="match status" value="1"/>
</dbReference>
<dbReference type="PANTHER" id="PTHR11777">
    <property type="entry name" value="ALANYL-TRNA SYNTHETASE"/>
    <property type="match status" value="1"/>
</dbReference>
<dbReference type="Pfam" id="PF02272">
    <property type="entry name" value="DHHA1"/>
    <property type="match status" value="1"/>
</dbReference>
<dbReference type="Pfam" id="PF01411">
    <property type="entry name" value="tRNA-synt_2c"/>
    <property type="match status" value="1"/>
</dbReference>
<dbReference type="Pfam" id="PF07973">
    <property type="entry name" value="tRNA_SAD"/>
    <property type="match status" value="1"/>
</dbReference>
<dbReference type="PRINTS" id="PR00980">
    <property type="entry name" value="TRNASYNTHALA"/>
</dbReference>
<dbReference type="SMART" id="SM00863">
    <property type="entry name" value="tRNA_SAD"/>
    <property type="match status" value="1"/>
</dbReference>
<dbReference type="SUPFAM" id="SSF55681">
    <property type="entry name" value="Class II aaRS and biotin synthetases"/>
    <property type="match status" value="1"/>
</dbReference>
<dbReference type="SUPFAM" id="SSF101353">
    <property type="entry name" value="Putative anticodon-binding domain of alanyl-tRNA synthetase (AlaRS)"/>
    <property type="match status" value="1"/>
</dbReference>
<dbReference type="SUPFAM" id="SSF55186">
    <property type="entry name" value="ThrRS/AlaRS common domain"/>
    <property type="match status" value="1"/>
</dbReference>
<dbReference type="SUPFAM" id="SSF50447">
    <property type="entry name" value="Translation proteins"/>
    <property type="match status" value="1"/>
</dbReference>
<dbReference type="PROSITE" id="PS50860">
    <property type="entry name" value="AA_TRNA_LIGASE_II_ALA"/>
    <property type="match status" value="1"/>
</dbReference>
<gene>
    <name evidence="1" type="primary">alaS</name>
    <name type="ordered locus">TRQ2_1433</name>
</gene>
<feature type="chain" id="PRO_0000347852" description="Alanine--tRNA ligase">
    <location>
        <begin position="1"/>
        <end position="863"/>
    </location>
</feature>
<feature type="binding site" evidence="1">
    <location>
        <position position="561"/>
    </location>
    <ligand>
        <name>Zn(2+)</name>
        <dbReference type="ChEBI" id="CHEBI:29105"/>
    </ligand>
</feature>
<feature type="binding site" evidence="1">
    <location>
        <position position="565"/>
    </location>
    <ligand>
        <name>Zn(2+)</name>
        <dbReference type="ChEBI" id="CHEBI:29105"/>
    </ligand>
</feature>
<feature type="binding site" evidence="1">
    <location>
        <position position="663"/>
    </location>
    <ligand>
        <name>Zn(2+)</name>
        <dbReference type="ChEBI" id="CHEBI:29105"/>
    </ligand>
</feature>
<feature type="binding site" evidence="1">
    <location>
        <position position="667"/>
    </location>
    <ligand>
        <name>Zn(2+)</name>
        <dbReference type="ChEBI" id="CHEBI:29105"/>
    </ligand>
</feature>
<organism>
    <name type="scientific">Thermotoga sp. (strain RQ2)</name>
    <dbReference type="NCBI Taxonomy" id="126740"/>
    <lineage>
        <taxon>Bacteria</taxon>
        <taxon>Thermotogati</taxon>
        <taxon>Thermotogota</taxon>
        <taxon>Thermotogae</taxon>
        <taxon>Thermotogales</taxon>
        <taxon>Thermotogaceae</taxon>
        <taxon>Thermotoga</taxon>
    </lineage>
</organism>
<sequence>MRYMTSEEIREAFLKFFEKKGHKILPSASLIPDDPQLLFTVAGMVPFKPIFWGKVEPVYTRVATCQKCLRTVDIENVGKTPRHHTFFEMLGNFSFGDYFKEEAIEWAWEFLTQVLGVPEEKLWVSVYEEDEEAFRIWNEKIGLPEKKILRMGKEDNFWGPAGPTGPCGPDTEIFYDTGYSKGCPEGEECTPANSEGRFVEIWNLVFTEYYQDEEGKLHPLPRKNIDTGAGLERFCAMMQGVYSNFDTDLFQPIINRIEELTGVGYKTDEEKDVSIRVIADHIRAITFLISEGVFPSNEGRGYVLRRIIRRAMRHGILLGMSEPFLYRIVDAVVEKMGKVYPEIVRGEGMVKEVLSAEENRFLKTLEQGMKVFDEIVEKKGKIDSEDAFRLYDTYGLPLELTLEIAKEKGVEVDVQEFNKYMEEQQRKSRAAMGDVEFARRYEYLEKLPKDFRTEFTGYEKLEDEGEVVLIARDDETVEEASEGTVEVVFSRTPFYAEKGGQVSDTGMVEWRDGKALVEYVFEASEGVIVQRIKILDGTLRRGQKVVLRVDKKRRESTMRNHTATHLLHAALKKVLGDHVRQAGSLVAPDRLRFDFTHFKGLSSAEIEQVEDLVNEWIMEAIPVEVRYTSYEEAVKSGVVALFTEKYGDVVRVVEVPGVSKELCGGTHVKNTGQIGLFKIISEESVSSGVRRIEAVTGFSALELLRNQKKLIDQLKEILGAREDELTDRVLSLREKVKELEKKLSQGRISEKMIAMKQLEDGVKVFHGVFEGVEAKHLGGIADNVLKKEGEGIVILFSKFENKVFLVVKVSENLLDRYDASSIARNIAKELGGSGGGRKNFAQAGGRHPERIKDVLERLEEFLR</sequence>
<reference key="1">
    <citation type="journal article" date="2011" name="J. Bacteriol.">
        <title>Genome sequence of Thermotoga sp. strain RQ2, a hyperthermophilic bacterium isolated from a geothermally heated region of the seafloor near Ribeira Quente, the Azores.</title>
        <authorList>
            <person name="Swithers K.S."/>
            <person name="DiPippo J.L."/>
            <person name="Bruce D.C."/>
            <person name="Detter C."/>
            <person name="Tapia R."/>
            <person name="Han S."/>
            <person name="Saunders E."/>
            <person name="Goodwin L.A."/>
            <person name="Han J."/>
            <person name="Woyke T."/>
            <person name="Pitluck S."/>
            <person name="Pennacchio L."/>
            <person name="Nolan M."/>
            <person name="Mikhailova N."/>
            <person name="Lykidis A."/>
            <person name="Land M.L."/>
            <person name="Brettin T."/>
            <person name="Stetter K.O."/>
            <person name="Nelson K.E."/>
            <person name="Gogarten J.P."/>
            <person name="Noll K.M."/>
        </authorList>
    </citation>
    <scope>NUCLEOTIDE SEQUENCE [LARGE SCALE GENOMIC DNA]</scope>
    <source>
        <strain>RQ2</strain>
    </source>
</reference>
<evidence type="ECO:0000255" key="1">
    <source>
        <dbReference type="HAMAP-Rule" id="MF_00036"/>
    </source>
</evidence>
<keyword id="KW-0030">Aminoacyl-tRNA synthetase</keyword>
<keyword id="KW-0067">ATP-binding</keyword>
<keyword id="KW-0963">Cytoplasm</keyword>
<keyword id="KW-0436">Ligase</keyword>
<keyword id="KW-0479">Metal-binding</keyword>
<keyword id="KW-0547">Nucleotide-binding</keyword>
<keyword id="KW-0648">Protein biosynthesis</keyword>
<keyword id="KW-0694">RNA-binding</keyword>
<keyword id="KW-0820">tRNA-binding</keyword>
<keyword id="KW-0862">Zinc</keyword>
<accession>B1LBS9</accession>
<proteinExistence type="inferred from homology"/>